<keyword id="KW-0477">Merozoite</keyword>
<keyword id="KW-1185">Reference proteome</keyword>
<keyword id="KW-0677">Repeat</keyword>
<name>LRR4_PLAF7</name>
<reference key="1">
    <citation type="journal article" date="1999" name="Nature">
        <title>The complete nucleotide sequence of chromosome 3 of Plasmodium falciparum.</title>
        <authorList>
            <person name="Bowman S."/>
            <person name="Lawson D."/>
            <person name="Basham D."/>
            <person name="Brown D."/>
            <person name="Chillingworth T."/>
            <person name="Churcher C.M."/>
            <person name="Craig A."/>
            <person name="Davies R.M."/>
            <person name="Devlin K."/>
            <person name="Feltwell T."/>
            <person name="Gentles S."/>
            <person name="Gwilliam R."/>
            <person name="Hamlin N."/>
            <person name="Harris D."/>
            <person name="Holroyd S."/>
            <person name="Hornsby T."/>
            <person name="Horrocks P."/>
            <person name="Jagels K."/>
            <person name="Jassal B."/>
            <person name="Kyes S."/>
            <person name="McLean J."/>
            <person name="Moule S."/>
            <person name="Mungall K.L."/>
            <person name="Murphy L."/>
            <person name="Oliver K."/>
            <person name="Quail M.A."/>
            <person name="Rajandream M.A."/>
            <person name="Rutter S."/>
            <person name="Skelton J."/>
            <person name="Squares R."/>
            <person name="Squares S."/>
            <person name="Sulston J.E."/>
            <person name="Whitehead S."/>
            <person name="Woodward J.R."/>
            <person name="Newbold C."/>
            <person name="Barrell B.G."/>
        </authorList>
    </citation>
    <scope>NUCLEOTIDE SEQUENCE [LARGE SCALE GENOMIC DNA]</scope>
    <source>
        <strain>3D7</strain>
    </source>
</reference>
<reference key="2">
    <citation type="journal article" date="2002" name="Nature">
        <title>Genome sequence of the human malaria parasite Plasmodium falciparum.</title>
        <authorList>
            <person name="Gardner M.J."/>
            <person name="Hall N."/>
            <person name="Fung E."/>
            <person name="White O."/>
            <person name="Berriman M."/>
            <person name="Hyman R.W."/>
            <person name="Carlton J.M."/>
            <person name="Pain A."/>
            <person name="Nelson K.E."/>
            <person name="Bowman S."/>
            <person name="Paulsen I.T."/>
            <person name="James K.D."/>
            <person name="Eisen J.A."/>
            <person name="Rutherford K.M."/>
            <person name="Salzberg S.L."/>
            <person name="Craig A."/>
            <person name="Kyes S."/>
            <person name="Chan M.-S."/>
            <person name="Nene V."/>
            <person name="Shallom S.J."/>
            <person name="Suh B."/>
            <person name="Peterson J."/>
            <person name="Angiuoli S."/>
            <person name="Pertea M."/>
            <person name="Allen J."/>
            <person name="Selengut J."/>
            <person name="Haft D."/>
            <person name="Mather M.W."/>
            <person name="Vaidya A.B."/>
            <person name="Martin D.M.A."/>
            <person name="Fairlamb A.H."/>
            <person name="Fraunholz M.J."/>
            <person name="Roos D.S."/>
            <person name="Ralph S.A."/>
            <person name="McFadden G.I."/>
            <person name="Cummings L.M."/>
            <person name="Subramanian G.M."/>
            <person name="Mungall C."/>
            <person name="Venter J.C."/>
            <person name="Carucci D.J."/>
            <person name="Hoffman S.L."/>
            <person name="Newbold C."/>
            <person name="Davis R.W."/>
            <person name="Fraser C.M."/>
            <person name="Barrell B.G."/>
        </authorList>
    </citation>
    <scope>NUCLEOTIDE SEQUENCE [LARGE SCALE GENOMIC DNA]</scope>
    <source>
        <strain>3D7</strain>
    </source>
</reference>
<reference key="3">
    <citation type="journal article" date="2002" name="Nature">
        <title>Sequence of Plasmodium falciparum chromosomes 1, 3-9 and 13.</title>
        <authorList>
            <person name="Hall N."/>
            <person name="Pain A."/>
            <person name="Berriman M."/>
            <person name="Churcher C.M."/>
            <person name="Harris B."/>
            <person name="Harris D."/>
            <person name="Mungall K.L."/>
            <person name="Bowman S."/>
            <person name="Atkin R."/>
            <person name="Baker S."/>
            <person name="Barron A."/>
            <person name="Brooks K."/>
            <person name="Buckee C.O."/>
            <person name="Burrows C."/>
            <person name="Cherevach I."/>
            <person name="Chillingworth C."/>
            <person name="Chillingworth T."/>
            <person name="Christodoulou Z."/>
            <person name="Clark L."/>
            <person name="Clark R."/>
            <person name="Corton C."/>
            <person name="Cronin A."/>
            <person name="Davies R.M."/>
            <person name="Davis P."/>
            <person name="Dear P."/>
            <person name="Dearden F."/>
            <person name="Doggett J."/>
            <person name="Feltwell T."/>
            <person name="Goble A."/>
            <person name="Goodhead I."/>
            <person name="Gwilliam R."/>
            <person name="Hamlin N."/>
            <person name="Hance Z."/>
            <person name="Harper D."/>
            <person name="Hauser H."/>
            <person name="Hornsby T."/>
            <person name="Holroyd S."/>
            <person name="Horrocks P."/>
            <person name="Humphray S."/>
            <person name="Jagels K."/>
            <person name="James K.D."/>
            <person name="Johnson D."/>
            <person name="Kerhornou A."/>
            <person name="Knights A."/>
            <person name="Konfortov B."/>
            <person name="Kyes S."/>
            <person name="Larke N."/>
            <person name="Lawson D."/>
            <person name="Lennard N."/>
            <person name="Line A."/>
            <person name="Maddison M."/>
            <person name="Mclean J."/>
            <person name="Mooney P."/>
            <person name="Moule S."/>
            <person name="Murphy L."/>
            <person name="Oliver K."/>
            <person name="Ormond D."/>
            <person name="Price C."/>
            <person name="Quail M.A."/>
            <person name="Rabbinowitsch E."/>
            <person name="Rajandream M.A."/>
            <person name="Rutter S."/>
            <person name="Rutherford K.M."/>
            <person name="Sanders M."/>
            <person name="Simmonds M."/>
            <person name="Seeger K."/>
            <person name="Sharp S."/>
            <person name="Smith R."/>
            <person name="Squares R."/>
            <person name="Squares S."/>
            <person name="Stevens K."/>
            <person name="Taylor K."/>
            <person name="Tivey A."/>
            <person name="Unwin L."/>
            <person name="Whitehead S."/>
            <person name="Woodward J.R."/>
            <person name="Sulston J.E."/>
            <person name="Craig A."/>
            <person name="Newbold C."/>
            <person name="Barrell B.G."/>
        </authorList>
    </citation>
    <scope>NUCLEOTIDE SEQUENCE [LARGE SCALE GENOMIC DNA]</scope>
    <source>
        <strain>3D7</strain>
    </source>
</reference>
<reference evidence="3" key="4">
    <citation type="journal article" date="2007" name="PLoS ONE">
        <title>Rapid identification of malaria vaccine candidates based on alpha-helical coiled coil protein motif.</title>
        <authorList>
            <person name="Villard V."/>
            <person name="Agak G.W."/>
            <person name="Frank G."/>
            <person name="Jafarshad A."/>
            <person name="Servis C."/>
            <person name="Nebie I."/>
            <person name="Sirima S.B."/>
            <person name="Felger I."/>
            <person name="Arevalo-Herrera M."/>
            <person name="Herrera S."/>
            <person name="Heitz F."/>
            <person name="Baecker V."/>
            <person name="Druilhe P."/>
            <person name="Kajava A.V."/>
            <person name="Corradin G."/>
        </authorList>
    </citation>
    <scope>SYNTHESIS OF 2208-2236 AND 2401-2429</scope>
    <scope>POSSIBLE CANDIDATE MALARIA EPITOPE</scope>
</reference>
<gene>
    <name type="ORF">PFC0760c</name>
</gene>
<proteinExistence type="evidence at protein level"/>
<evidence type="ECO:0000256" key="1">
    <source>
        <dbReference type="SAM" id="MobiDB-lite"/>
    </source>
</evidence>
<evidence type="ECO:0000269" key="2">
    <source>
    </source>
</evidence>
<evidence type="ECO:0000305" key="3"/>
<sequence length="3394" mass="402952">MNNDFMKNEKDDYDKVNEEEYSLENFRGIDMNNNVDISNMNNNLNDVGELINIDNNDKYDEDQLSLIKESLEYGELLLSNVKEEDENNRREHFKKNDYMKDTEDVHYKESKIGQDKRFMHSLCVKELKSTEEGELFDDEKYKDKDTLINMLRKKLEIKIKDYNLIMDTLILTKEECSKKEEQLKDYKMKYNKMEKECYSLKNEIERKNNEKHLNIGSFSFYKNEYDDMKYKLLKCEEKNKILLNKNQELHQTIIQMKNDSYNQNIKFKKDIDVLTEDKKNILIQNKNFTKQNKILIDKYLRQEKIIYKLKKHNEEQEIIIKECHKKIEFVNKNSVNHLNKVRDVLNKSLIKSEEHVKLYTNLKKENDSLKIEYNKSKTNIQQLNEQLVNYKNFIKEMEKKYKQLVVKNNSLFSITHDFINLKNSNIIIIRRTSDMKQIFKMYNLDIEHFNEQDHLSVIYIYEILYNTNDNNNNDNDNNNDNNNNNNNNNDNNNNNNNDNNNNNNNYNNIMMMIENMNSGNHPNSNNLHNYRHNTNDENNLSSLKTSFRYKINNKSGKSRSIKSRSHFSGDNEYIQDQLSNREMKDHYNYIERYNHSSNRNDIHNLYYMEENVSHNNNKSDYDEDGDAENNNYYIKIKKNKYKKLNDLLNKAQMKIITLTRANEMFEKYCSNIKNTLIRDDMKKFRKPDISDVHILHNEKIYLEKLLNEKLNYIKDIEKKLDELHGVINKNKEDIYILQVEKQTLIKVISSVYDYTKMESENHIFKMNTTWNKMLNNVHMSSNKDYNNQNNQNIENNQNIENNQNNQNIENNQNIENNQNNQNNQNNQNNQNNQNNQNNQNNAGIHISPDDFLKYRMSLEKFIQFTIKEHIVYIMKDEKKKTSNIIKESISLKKKHTKKSIINNNNDNNNEDDDDNDMLSVMYSNDDVIKNKRKENNKEILEEHVSFSSFSNNEYIAHSFNSILLQLSNYIFNIECKQMEYFKNSNLLSYVDDYTITIELFYRLKKYNNIFSIEQILGTQYPSILQKLHDGIYCLKDNNKKKNNDGDNKSQEDDDGNKKKNNDGDNKSQEDDDGNKKKNNDGDNKSQEDDYGNKKKNNDDDDDDSYKIELIVDELNKCKKNYTDEELYELMKGSDFDIFKKYKNFYLNHFININNIFSTIISFHIHNIEDKYKKVYERYFNLFNFNFSNVELSFDLLIRRFDKILRLTKKYEQLLEENYEKIKNKNEKEEYLHACIKELEMNLERYNNEKIILDEQINEKEKKINIINEKYLILEKEYEEYQNKNIFINAQIENLEKEKKQLQEEIIQKDMINVKLNEKNCDIIKIYEKEKQYLHTLLQENKDSHNYLKDKFENLLNLNEKLKYDHDISLNKINTLWLEEKENNKKNTFHMNNLRVENNNLLLKMKELQNKYNIIKKELNERIKQINVFRNNVSTLSLRDNRSTRGSIHQINNMYMNNTHLGFMGASKINNNISNLYYSNMIHMSHRGSIIKNKEDAEGNSTQARMNNKDSTDNIINNIHNTDNINNMNNINNNTLNSINSNHLYYPFPFHNNVNSPKMVGMCDVTLASGVNKKDDFLLNLEENEENSFLEYEIRIKSLQEELCDKESEILKIKGEKNILITCIETWKCFCKNSKEEISRLKEICKEQLEKHKEFLLINKSNEDKLKYINSLLCDEKDKYDIVVKDIKNNMRNEIDKLNNDINEKSYEIKLLKHENNNLINEMNILKNKETENMNIKQKEEDYIKLIKKDKTNIQNEYNDLLEKYNEVVVKNNMLYNDMNVLLKEHKEEIFLLKENIKILQKDNTYLNDMFKNQINYVDNNLLKNRLDQLFNINQDLQKHLDTNQKHLEQLKYDYIEIKERLKIEKTKINKQEKYIIQLQKDNNLILNDFNSTTTTTNNNNNNDNNNDNNNDNNDNNNDTYQQFIHSLKANLENSRLELKELSNLNEKIQLSDEKNRMKITILEDKLFKNEKDKMKLQQIIDDNNKNYMIQYNKLKTNLDMLSEENRMLLLNKEEYEKQIEQLNHDHKLFISTKNNDIQIIENEKLQEQVDQYITTINEKDKIIVHLNLQIKKLANQNEHMRSRCDIFNVAHSQDNIKNDHMVVGEDIMGDTNHDVNKNIDQGTNQHINQGTNQHINQGTNQHDTCDGPNYNYVKVQNATNREDNKNKERNLSQEIYKYINENIDLTSELEKKNDMLENYKNELKEKNEEIYKLNNDIDMLSNNCKKLKESIMMMEKYKIIMNNNIQEKDEIIENLKNKYNNKLDDLINNYSVVDKSIVSCFEDSNIMSPSCNDILNVFNNLSKSNKKVCTNMDICNENMDSISSINNVNNINNVNNINNVNNINNVNNINNVKNIVDINNYLVNNLQLNKDNDNIIIIKFNILKLFKLGSCYLYIINRNLKEIQMLKNQILSLEESIKSLNEFINNLKNENEKNELIKINNFEEILKLKNNLQDNESCIQNLNNYLKKNEELNKINVKNIFKYKGYIIHLIQQSNVFCKIFKHFNENKIIDQSIINKLLYLKKSFDFYMYDSVIQEIRENKNIIINQDFLTDEYFKHIQTFTKTCNVLIQRGYLSILKDTNNDFFIQNKQSNQQGNQNGNHINMCNIYPDDEINVTADQQIFDGTENVQQSLQNEEDYVNNEEMYTDKMDLDNNMNGDDDDDDDDDDDDDNNNNNNNNNNNNNNNMGDEDNHLVNAFNNHNLLTNGNVKSDQINNETLERYEENIIQNIYTNDNVDNNQVIENINKILIKDKQDIINNDELKNEHNNLIRLINESIENAHNLENVYVQNDANNLINDNIKKEETLTYVDEKDNVSNESNSKCDDDKKENEDIIQAKNENYPVSTHYDNNDDINKDNINNDNNNDNINDDNNNDNINNDNNNDNINNDNINNDNINNDNNNDNNNDNSNNGFVCELSSNINDFNNILNVNKDNFQGINKSNNFSTNLSEYNYDAYVKIVEAGSALENKKQQDKKRKYFSDSEITKENGYLGESNSIKIRKVSVGGDNDNNDDDNNDDNDDDDNDDDNNDDDNNNDDDNDDSYDDEEKEQENYSNDVNTELNNHVTFEDISVHNNIQENKKNYFSNVHENTFNLHVDENVHEDLQNYEDYVNNNNNNNDDDNEEESNNSCYIISSDDEGDKKNVSKQNDDDEDDDDNGDDDDNEDDDDNEDDDNGDDDDNEDDDNGDDDDNEDDNYDDEDNDNYENEDDDNYANEDDDNYENDDDDNYENDDDDNYENDDDNYENDDDDNYENGDDDNDNDHNDDNNDEEKYSCHDDKNEHTNNDLLNIDHDNNKNNITDELYSTYNVSVSHNKDPSNKENEIQNLISIDSSNENDENDENDENDENDENDENDENDENDENDENDEKDENDENDENDENFDNNNEGTLNEMNSEE</sequence>
<comment type="biotechnology">
    <text evidence="2">Possible candidate for an effective malaria vaccine as determined by epitope response in sera.</text>
</comment>
<protein>
    <recommendedName>
        <fullName>Protein PFC0760c</fullName>
    </recommendedName>
</protein>
<feature type="chain" id="PRO_0000388754" description="Protein PFC0760c">
    <location>
        <begin position="1"/>
        <end position="3394"/>
    </location>
</feature>
<feature type="region of interest" description="Disordered" evidence="1">
    <location>
        <begin position="471"/>
        <end position="539"/>
    </location>
</feature>
<feature type="region of interest" description="Disordered" evidence="1">
    <location>
        <begin position="779"/>
        <end position="844"/>
    </location>
</feature>
<feature type="region of interest" description="Disordered" evidence="1">
    <location>
        <begin position="1038"/>
        <end position="1099"/>
    </location>
</feature>
<feature type="region of interest" description="Disordered" evidence="1">
    <location>
        <begin position="1892"/>
        <end position="1918"/>
    </location>
</feature>
<feature type="region of interest" description="Disordered" evidence="1">
    <location>
        <begin position="2648"/>
        <end position="2693"/>
    </location>
</feature>
<feature type="region of interest" description="Disordered" evidence="1">
    <location>
        <begin position="2835"/>
        <end position="2909"/>
    </location>
</feature>
<feature type="region of interest" description="Disordered" evidence="1">
    <location>
        <begin position="3000"/>
        <end position="3057"/>
    </location>
</feature>
<feature type="region of interest" description="Disordered" evidence="1">
    <location>
        <begin position="3107"/>
        <end position="3394"/>
    </location>
</feature>
<feature type="compositionally biased region" description="Low complexity" evidence="1">
    <location>
        <begin position="471"/>
        <end position="508"/>
    </location>
</feature>
<feature type="compositionally biased region" description="Low complexity" evidence="1">
    <location>
        <begin position="515"/>
        <end position="528"/>
    </location>
</feature>
<feature type="compositionally biased region" description="Low complexity" evidence="1">
    <location>
        <begin position="786"/>
        <end position="841"/>
    </location>
</feature>
<feature type="compositionally biased region" description="Basic and acidic residues" evidence="1">
    <location>
        <begin position="1038"/>
        <end position="1097"/>
    </location>
</feature>
<feature type="compositionally biased region" description="Acidic residues" evidence="1">
    <location>
        <begin position="2657"/>
        <end position="2671"/>
    </location>
</feature>
<feature type="compositionally biased region" description="Low complexity" evidence="1">
    <location>
        <begin position="2672"/>
        <end position="2686"/>
    </location>
</feature>
<feature type="compositionally biased region" description="Polar residues" evidence="1">
    <location>
        <begin position="2836"/>
        <end position="2846"/>
    </location>
</feature>
<feature type="compositionally biased region" description="Low complexity" evidence="1">
    <location>
        <begin position="2855"/>
        <end position="2865"/>
    </location>
</feature>
<feature type="compositionally biased region" description="Low complexity" evidence="1">
    <location>
        <begin position="2872"/>
        <end position="2909"/>
    </location>
</feature>
<feature type="compositionally biased region" description="Acidic residues" evidence="1">
    <location>
        <begin position="3007"/>
        <end position="3047"/>
    </location>
</feature>
<feature type="compositionally biased region" description="Acidic residues" evidence="1">
    <location>
        <begin position="3147"/>
        <end position="3257"/>
    </location>
</feature>
<feature type="compositionally biased region" description="Basic and acidic residues" evidence="1">
    <location>
        <begin position="3258"/>
        <end position="3292"/>
    </location>
</feature>
<feature type="compositionally biased region" description="Polar residues" evidence="1">
    <location>
        <begin position="3300"/>
        <end position="3309"/>
    </location>
</feature>
<feature type="compositionally biased region" description="Basic and acidic residues" evidence="1">
    <location>
        <begin position="3310"/>
        <end position="3320"/>
    </location>
</feature>
<feature type="compositionally biased region" description="Polar residues" evidence="1">
    <location>
        <begin position="3321"/>
        <end position="3330"/>
    </location>
</feature>
<feature type="compositionally biased region" description="Acidic residues" evidence="1">
    <location>
        <begin position="3331"/>
        <end position="3379"/>
    </location>
</feature>
<feature type="compositionally biased region" description="Polar residues" evidence="1">
    <location>
        <begin position="3385"/>
        <end position="3394"/>
    </location>
</feature>
<accession>O77384</accession>
<dbReference type="EMBL" id="AL844502">
    <property type="protein sequence ID" value="CAB11140.1"/>
    <property type="molecule type" value="Genomic_DNA"/>
</dbReference>
<dbReference type="PIR" id="T18501">
    <property type="entry name" value="T18501"/>
</dbReference>
<dbReference type="RefSeq" id="XP_001351243.1">
    <property type="nucleotide sequence ID" value="XM_001351207.1"/>
</dbReference>
<dbReference type="SMR" id="O77384"/>
<dbReference type="BioGRID" id="1209731">
    <property type="interactions" value="16"/>
</dbReference>
<dbReference type="FunCoup" id="O77384">
    <property type="interactions" value="1"/>
</dbReference>
<dbReference type="IntAct" id="O77384">
    <property type="interactions" value="13"/>
</dbReference>
<dbReference type="STRING" id="36329.O77384"/>
<dbReference type="PaxDb" id="5833-PFC0760c"/>
<dbReference type="EnsemblProtists" id="CAB11140">
    <property type="protein sequence ID" value="CAB11140"/>
    <property type="gene ID" value="PF3D7_0317300"/>
</dbReference>
<dbReference type="KEGG" id="pfa:PF3D7_0317300"/>
<dbReference type="VEuPathDB" id="PlasmoDB:PF3D7_0317300"/>
<dbReference type="HOGENOM" id="CLU_224997_0_0_1"/>
<dbReference type="InParanoid" id="O77384"/>
<dbReference type="OMA" id="NVHENTF"/>
<dbReference type="OrthoDB" id="378101at2759"/>
<dbReference type="PhylomeDB" id="O77384"/>
<dbReference type="Proteomes" id="UP000001450">
    <property type="component" value="Chromosome 3"/>
</dbReference>
<dbReference type="GO" id="GO:0005737">
    <property type="term" value="C:cytoplasm"/>
    <property type="evidence" value="ECO:0000303"/>
    <property type="project" value="UniProtKB"/>
</dbReference>
<dbReference type="GO" id="GO:0005789">
    <property type="term" value="C:endoplasmic reticulum membrane"/>
    <property type="evidence" value="ECO:0000318"/>
    <property type="project" value="GO_Central"/>
</dbReference>
<dbReference type="GO" id="GO:0016020">
    <property type="term" value="C:membrane"/>
    <property type="evidence" value="ECO:0000303"/>
    <property type="project" value="UniProtKB"/>
</dbReference>
<dbReference type="GO" id="GO:0005634">
    <property type="term" value="C:nucleus"/>
    <property type="evidence" value="ECO:0000318"/>
    <property type="project" value="GO_Central"/>
</dbReference>
<dbReference type="GO" id="GO:0003700">
    <property type="term" value="F:DNA-binding transcription factor activity"/>
    <property type="evidence" value="ECO:0000318"/>
    <property type="project" value="GO_Central"/>
</dbReference>
<dbReference type="GO" id="GO:0043565">
    <property type="term" value="F:sequence-specific DNA binding"/>
    <property type="evidence" value="ECO:0000318"/>
    <property type="project" value="GO_Central"/>
</dbReference>
<dbReference type="GO" id="GO:0045893">
    <property type="term" value="P:positive regulation of DNA-templated transcription"/>
    <property type="evidence" value="ECO:0000318"/>
    <property type="project" value="GO_Central"/>
</dbReference>
<dbReference type="GO" id="GO:0016540">
    <property type="term" value="P:protein autoprocessing"/>
    <property type="evidence" value="ECO:0000318"/>
    <property type="project" value="GO_Central"/>
</dbReference>
<dbReference type="InterPro" id="IPR051577">
    <property type="entry name" value="MRF-like"/>
</dbReference>
<dbReference type="PANTHER" id="PTHR13029">
    <property type="match status" value="1"/>
</dbReference>
<dbReference type="PANTHER" id="PTHR13029:SF18">
    <property type="entry name" value="MYELIN REGULATORY FACTOR HOMOLOG 1"/>
    <property type="match status" value="1"/>
</dbReference>
<organism>
    <name type="scientific">Plasmodium falciparum (isolate 3D7)</name>
    <dbReference type="NCBI Taxonomy" id="36329"/>
    <lineage>
        <taxon>Eukaryota</taxon>
        <taxon>Sar</taxon>
        <taxon>Alveolata</taxon>
        <taxon>Apicomplexa</taxon>
        <taxon>Aconoidasida</taxon>
        <taxon>Haemosporida</taxon>
        <taxon>Plasmodiidae</taxon>
        <taxon>Plasmodium</taxon>
        <taxon>Plasmodium (Laverania)</taxon>
    </lineage>
</organism>